<name>GSA_TROW8</name>
<gene>
    <name evidence="1" type="primary">hemL</name>
    <name type="ordered locus">TW743</name>
</gene>
<protein>
    <recommendedName>
        <fullName evidence="1">Glutamate-1-semialdehyde 2,1-aminomutase</fullName>
        <shortName evidence="1">GSA</shortName>
        <ecNumber evidence="1">5.4.3.8</ecNumber>
    </recommendedName>
    <alternativeName>
        <fullName evidence="1">Glutamate-1-semialdehyde aminotransferase</fullName>
        <shortName evidence="1">GSA-AT</shortName>
    </alternativeName>
</protein>
<feature type="chain" id="PRO_0000243640" description="Glutamate-1-semialdehyde 2,1-aminomutase">
    <location>
        <begin position="1"/>
        <end position="466"/>
    </location>
</feature>
<feature type="modified residue" description="N6-(pyridoxal phosphate)lysine" evidence="1">
    <location>
        <position position="292"/>
    </location>
</feature>
<dbReference type="EC" id="5.4.3.8" evidence="1"/>
<dbReference type="EMBL" id="BX251412">
    <property type="protein sequence ID" value="CAD67402.1"/>
    <property type="molecule type" value="Genomic_DNA"/>
</dbReference>
<dbReference type="SMR" id="Q83H98"/>
<dbReference type="KEGG" id="tws:TW743"/>
<dbReference type="HOGENOM" id="CLU_016922_1_5_11"/>
<dbReference type="UniPathway" id="UPA00251">
    <property type="reaction ID" value="UER00317"/>
</dbReference>
<dbReference type="GO" id="GO:0005737">
    <property type="term" value="C:cytoplasm"/>
    <property type="evidence" value="ECO:0007669"/>
    <property type="project" value="UniProtKB-SubCell"/>
</dbReference>
<dbReference type="GO" id="GO:0042286">
    <property type="term" value="F:glutamate-1-semialdehyde 2,1-aminomutase activity"/>
    <property type="evidence" value="ECO:0007669"/>
    <property type="project" value="UniProtKB-UniRule"/>
</dbReference>
<dbReference type="GO" id="GO:0030170">
    <property type="term" value="F:pyridoxal phosphate binding"/>
    <property type="evidence" value="ECO:0007669"/>
    <property type="project" value="InterPro"/>
</dbReference>
<dbReference type="GO" id="GO:0008483">
    <property type="term" value="F:transaminase activity"/>
    <property type="evidence" value="ECO:0007669"/>
    <property type="project" value="InterPro"/>
</dbReference>
<dbReference type="GO" id="GO:0006782">
    <property type="term" value="P:protoporphyrinogen IX biosynthetic process"/>
    <property type="evidence" value="ECO:0007669"/>
    <property type="project" value="UniProtKB-UniRule"/>
</dbReference>
<dbReference type="CDD" id="cd00610">
    <property type="entry name" value="OAT_like"/>
    <property type="match status" value="1"/>
</dbReference>
<dbReference type="Gene3D" id="3.90.1150.10">
    <property type="entry name" value="Aspartate Aminotransferase, domain 1"/>
    <property type="match status" value="1"/>
</dbReference>
<dbReference type="Gene3D" id="3.40.640.10">
    <property type="entry name" value="Type I PLP-dependent aspartate aminotransferase-like (Major domain)"/>
    <property type="match status" value="1"/>
</dbReference>
<dbReference type="HAMAP" id="MF_00375">
    <property type="entry name" value="HemL_aminotrans_3"/>
    <property type="match status" value="1"/>
</dbReference>
<dbReference type="InterPro" id="IPR004639">
    <property type="entry name" value="4pyrrol_synth_GluAld_NH2Trfase"/>
</dbReference>
<dbReference type="InterPro" id="IPR005814">
    <property type="entry name" value="Aminotrans_3"/>
</dbReference>
<dbReference type="InterPro" id="IPR015424">
    <property type="entry name" value="PyrdxlP-dep_Trfase"/>
</dbReference>
<dbReference type="InterPro" id="IPR015421">
    <property type="entry name" value="PyrdxlP-dep_Trfase_major"/>
</dbReference>
<dbReference type="InterPro" id="IPR015422">
    <property type="entry name" value="PyrdxlP-dep_Trfase_small"/>
</dbReference>
<dbReference type="NCBIfam" id="NF000818">
    <property type="entry name" value="PRK00062.1"/>
    <property type="match status" value="1"/>
</dbReference>
<dbReference type="PANTHER" id="PTHR43713">
    <property type="entry name" value="GLUTAMATE-1-SEMIALDEHYDE 2,1-AMINOMUTASE"/>
    <property type="match status" value="1"/>
</dbReference>
<dbReference type="PANTHER" id="PTHR43713:SF3">
    <property type="entry name" value="GLUTAMATE-1-SEMIALDEHYDE 2,1-AMINOMUTASE 1, CHLOROPLASTIC-RELATED"/>
    <property type="match status" value="1"/>
</dbReference>
<dbReference type="Pfam" id="PF00202">
    <property type="entry name" value="Aminotran_3"/>
    <property type="match status" value="2"/>
</dbReference>
<dbReference type="SUPFAM" id="SSF53383">
    <property type="entry name" value="PLP-dependent transferases"/>
    <property type="match status" value="1"/>
</dbReference>
<reference key="1">
    <citation type="journal article" date="2003" name="Lancet">
        <title>Sequencing and analysis of the genome of the Whipple's disease bacterium Tropheryma whipplei.</title>
        <authorList>
            <person name="Bentley S.D."/>
            <person name="Maiwald M."/>
            <person name="Murphy L.D."/>
            <person name="Pallen M.J."/>
            <person name="Yeats C.A."/>
            <person name="Dover L.G."/>
            <person name="Norbertczak H.T."/>
            <person name="Besra G.S."/>
            <person name="Quail M.A."/>
            <person name="Harris D.E."/>
            <person name="von Herbay A."/>
            <person name="Goble A."/>
            <person name="Rutter S."/>
            <person name="Squares R."/>
            <person name="Squares S."/>
            <person name="Barrell B.G."/>
            <person name="Parkhill J."/>
            <person name="Relman D.A."/>
        </authorList>
    </citation>
    <scope>NUCLEOTIDE SEQUENCE [LARGE SCALE GENOMIC DNA]</scope>
    <source>
        <strain>TW08/27</strain>
    </source>
</reference>
<accession>Q83H98</accession>
<proteinExistence type="inferred from homology"/>
<evidence type="ECO:0000255" key="1">
    <source>
        <dbReference type="HAMAP-Rule" id="MF_00375"/>
    </source>
</evidence>
<keyword id="KW-0963">Cytoplasm</keyword>
<keyword id="KW-0413">Isomerase</keyword>
<keyword id="KW-0627">Porphyrin biosynthesis</keyword>
<keyword id="KW-0663">Pyridoxal phosphate</keyword>
<comment type="catalytic activity">
    <reaction evidence="1">
        <text>(S)-4-amino-5-oxopentanoate = 5-aminolevulinate</text>
        <dbReference type="Rhea" id="RHEA:14265"/>
        <dbReference type="ChEBI" id="CHEBI:57501"/>
        <dbReference type="ChEBI" id="CHEBI:356416"/>
        <dbReference type="EC" id="5.4.3.8"/>
    </reaction>
</comment>
<comment type="cofactor">
    <cofactor evidence="1">
        <name>pyridoxal 5'-phosphate</name>
        <dbReference type="ChEBI" id="CHEBI:597326"/>
    </cofactor>
</comment>
<comment type="pathway">
    <text evidence="1">Porphyrin-containing compound metabolism; protoporphyrin-IX biosynthesis; 5-aminolevulinate from L-glutamyl-tRNA(Glu): step 2/2.</text>
</comment>
<comment type="subunit">
    <text evidence="1">Homodimer.</text>
</comment>
<comment type="subcellular location">
    <subcellularLocation>
        <location evidence="1">Cytoplasm</location>
    </subcellularLocation>
</comment>
<comment type="similarity">
    <text evidence="1">Belongs to the class-III pyridoxal-phosphate-dependent aminotransferase family. HemL subfamily.</text>
</comment>
<organism>
    <name type="scientific">Tropheryma whipplei (strain TW08/27)</name>
    <name type="common">Whipple's bacillus</name>
    <dbReference type="NCBI Taxonomy" id="218496"/>
    <lineage>
        <taxon>Bacteria</taxon>
        <taxon>Bacillati</taxon>
        <taxon>Actinomycetota</taxon>
        <taxon>Actinomycetes</taxon>
        <taxon>Micrococcales</taxon>
        <taxon>Tropherymataceae</taxon>
        <taxon>Tropheryma</taxon>
    </lineage>
</organism>
<sequence length="466" mass="49582">MRTNFEWFEEAKRFIPGGVNSPVRAYAAVGGTPRFLAKAQGAYVTDIEGREYVDLVSSWGPLILGHAHPKVIDAVINTAHRGMSYGAPTTLEVELAELVCNRICNAQGIKPVERLRLVSTGTESCMTAIRLARCFTGRDLIVKFSGHYHGHADPFLIDAGSGLVGHPSSGGVPESVAKNTLVVPYNDLAVLEYLFEAYPNQIACIITEACPANMGVIPPDPGFNARVADLGHSHGALIIFDEVITGFRVGSGGFWALETSLASQQPTQAVSEGSVSDSAYSAYVPDLFTFAKVLGGGLPIGAIGGRAEIMDLLSPSGPVYQAGTLSGNPLATAAGLATLRLADSNIYEHMNRVARALINEIQSAFHDAGVPCTVQSAGNLFGISFSAIAPRDFTQATSQEHWRYSNFFHSMLNSGVLLPPSVYEAWFVSAAFDDRAIERVVNALPDAVRAAGSAPARPKGFEPPTF</sequence>